<proteinExistence type="inferred from homology"/>
<gene>
    <name evidence="1" type="primary">cnxH</name>
    <name type="ORF">An02g13350</name>
</gene>
<organism>
    <name type="scientific">Aspergillus niger (strain ATCC MYA-4892 / CBS 513.88 / FGSC A1513)</name>
    <dbReference type="NCBI Taxonomy" id="425011"/>
    <lineage>
        <taxon>Eukaryota</taxon>
        <taxon>Fungi</taxon>
        <taxon>Dikarya</taxon>
        <taxon>Ascomycota</taxon>
        <taxon>Pezizomycotina</taxon>
        <taxon>Eurotiomycetes</taxon>
        <taxon>Eurotiomycetidae</taxon>
        <taxon>Eurotiales</taxon>
        <taxon>Aspergillaceae</taxon>
        <taxon>Aspergillus</taxon>
        <taxon>Aspergillus subgen. Circumdati</taxon>
    </lineage>
</organism>
<keyword id="KW-0963">Cytoplasm</keyword>
<keyword id="KW-0501">Molybdenum cofactor biosynthesis</keyword>
<keyword id="KW-1185">Reference proteome</keyword>
<keyword id="KW-0808">Transferase</keyword>
<sequence>MSSTTPTTEPDQLPPHLDPQTYPRTTTNPTLNTHITLTYHPLDPTSALSKISSPNAGANVLFLGTTRNSFEDRPVAQLSYTAYPPLALKTLSKIAEDAVAKHELLGVVIGHRLGDVPIGESSIVIAVSAGHRGAAWRAGEEVLELCKEKAEIWKKEVFVDGQGEWRANRDRDAEGKLVQG</sequence>
<accession>A2QF55</accession>
<name>MOC2B_ASPNC</name>
<feature type="chain" id="PRO_0000369352" description="Molybdopterin synthase catalytic subunit">
    <location>
        <begin position="1"/>
        <end position="180"/>
    </location>
</feature>
<feature type="region of interest" description="Disordered" evidence="2">
    <location>
        <begin position="1"/>
        <end position="31"/>
    </location>
</feature>
<feature type="compositionally biased region" description="Polar residues" evidence="2">
    <location>
        <begin position="1"/>
        <end position="10"/>
    </location>
</feature>
<feature type="compositionally biased region" description="Low complexity" evidence="2">
    <location>
        <begin position="21"/>
        <end position="31"/>
    </location>
</feature>
<feature type="binding site" evidence="1">
    <location>
        <begin position="131"/>
        <end position="132"/>
    </location>
    <ligand>
        <name>substrate</name>
    </ligand>
</feature>
<feature type="binding site" evidence="1">
    <location>
        <position position="147"/>
    </location>
    <ligand>
        <name>substrate</name>
    </ligand>
</feature>
<feature type="binding site" evidence="1">
    <location>
        <begin position="154"/>
        <end position="156"/>
    </location>
    <ligand>
        <name>substrate</name>
    </ligand>
</feature>
<protein>
    <recommendedName>
        <fullName evidence="1">Molybdopterin synthase catalytic subunit</fullName>
        <ecNumber evidence="1">2.8.1.12</ecNumber>
    </recommendedName>
    <alternativeName>
        <fullName evidence="1">Common component for nitrate reductase and xanthine dehydrogenase protein H</fullName>
    </alternativeName>
    <alternativeName>
        <fullName evidence="1">Molybdenum cofactor synthesis protein 2 large subunit</fullName>
    </alternativeName>
    <alternativeName>
        <fullName evidence="1">Molybdenum cofactor synthesis protein 2B</fullName>
        <shortName evidence="1">MOCS2B</shortName>
    </alternativeName>
</protein>
<comment type="function">
    <text evidence="1">Catalytic subunit of the molybdopterin synthase complex, a complex that catalyzes the conversion of precursor Z into molybdopterin. Acts by mediating the incorporation of 2 sulfur atoms from thiocarboxylated MOCS2A into precursor Z to generate a dithiolene group.</text>
</comment>
<comment type="catalytic activity">
    <reaction evidence="1">
        <text>2 [molybdopterin-synthase sulfur-carrier protein]-C-terminal-Gly-aminoethanethioate + cyclic pyranopterin phosphate + H2O = molybdopterin + 2 [molybdopterin-synthase sulfur-carrier protein]-C-terminal Gly-Gly + 2 H(+)</text>
        <dbReference type="Rhea" id="RHEA:26333"/>
        <dbReference type="Rhea" id="RHEA-COMP:12202"/>
        <dbReference type="Rhea" id="RHEA-COMP:19907"/>
        <dbReference type="ChEBI" id="CHEBI:15377"/>
        <dbReference type="ChEBI" id="CHEBI:15378"/>
        <dbReference type="ChEBI" id="CHEBI:58698"/>
        <dbReference type="ChEBI" id="CHEBI:59648"/>
        <dbReference type="ChEBI" id="CHEBI:90778"/>
        <dbReference type="ChEBI" id="CHEBI:232372"/>
        <dbReference type="EC" id="2.8.1.12"/>
    </reaction>
</comment>
<comment type="pathway">
    <text evidence="1">Cofactor biosynthesis; molybdopterin biosynthesis.</text>
</comment>
<comment type="subunit">
    <text evidence="1">Heterotetramer; composed of 2 small (MOCS2A) and 2 large (MOCS2B) subunits.</text>
</comment>
<comment type="subcellular location">
    <subcellularLocation>
        <location evidence="1">Cytoplasm</location>
    </subcellularLocation>
</comment>
<comment type="similarity">
    <text evidence="1">Belongs to the MoaE family. MOCS2B subfamily.</text>
</comment>
<evidence type="ECO:0000255" key="1">
    <source>
        <dbReference type="HAMAP-Rule" id="MF_03052"/>
    </source>
</evidence>
<evidence type="ECO:0000256" key="2">
    <source>
        <dbReference type="SAM" id="MobiDB-lite"/>
    </source>
</evidence>
<dbReference type="EC" id="2.8.1.12" evidence="1"/>
<dbReference type="EMBL" id="AM270038">
    <property type="protein sequence ID" value="CAK47748.1"/>
    <property type="molecule type" value="Genomic_DNA"/>
</dbReference>
<dbReference type="RefSeq" id="XP_001400466.1">
    <property type="nucleotide sequence ID" value="XM_001400429.1"/>
</dbReference>
<dbReference type="SMR" id="A2QF55"/>
<dbReference type="EnsemblFungi" id="CAK47748">
    <property type="protein sequence ID" value="CAK47748"/>
    <property type="gene ID" value="An02g13350"/>
</dbReference>
<dbReference type="GeneID" id="4979875"/>
<dbReference type="KEGG" id="ang:An02g13350"/>
<dbReference type="VEuPathDB" id="FungiDB:An02g13350"/>
<dbReference type="HOGENOM" id="CLU_089568_3_1_1"/>
<dbReference type="UniPathway" id="UPA00344"/>
<dbReference type="Proteomes" id="UP000006706">
    <property type="component" value="Chromosome 4R"/>
</dbReference>
<dbReference type="GO" id="GO:1990140">
    <property type="term" value="C:molybdopterin synthase complex"/>
    <property type="evidence" value="ECO:0000250"/>
    <property type="project" value="UniProtKB"/>
</dbReference>
<dbReference type="GO" id="GO:0030366">
    <property type="term" value="F:molybdopterin synthase activity"/>
    <property type="evidence" value="ECO:0007669"/>
    <property type="project" value="UniProtKB-UniRule"/>
</dbReference>
<dbReference type="GO" id="GO:0006777">
    <property type="term" value="P:Mo-molybdopterin cofactor biosynthetic process"/>
    <property type="evidence" value="ECO:0000250"/>
    <property type="project" value="UniProtKB"/>
</dbReference>
<dbReference type="CDD" id="cd00756">
    <property type="entry name" value="MoaE"/>
    <property type="match status" value="1"/>
</dbReference>
<dbReference type="FunFam" id="3.90.1170.40:FF:000003">
    <property type="entry name" value="Molybdopterin converting factor subunit 2"/>
    <property type="match status" value="1"/>
</dbReference>
<dbReference type="Gene3D" id="3.90.1170.40">
    <property type="entry name" value="Molybdopterin biosynthesis MoaE subunit"/>
    <property type="match status" value="1"/>
</dbReference>
<dbReference type="HAMAP" id="MF_03052">
    <property type="entry name" value="MOC2B"/>
    <property type="match status" value="1"/>
</dbReference>
<dbReference type="InterPro" id="IPR036563">
    <property type="entry name" value="MoaE_sf"/>
</dbReference>
<dbReference type="InterPro" id="IPR028888">
    <property type="entry name" value="MOCS2B_euk"/>
</dbReference>
<dbReference type="InterPro" id="IPR003448">
    <property type="entry name" value="Mopterin_biosynth_MoaE"/>
</dbReference>
<dbReference type="PANTHER" id="PTHR23404">
    <property type="entry name" value="MOLYBDOPTERIN SYNTHASE RELATED"/>
    <property type="match status" value="1"/>
</dbReference>
<dbReference type="Pfam" id="PF02391">
    <property type="entry name" value="MoaE"/>
    <property type="match status" value="1"/>
</dbReference>
<dbReference type="SUPFAM" id="SSF54690">
    <property type="entry name" value="Molybdopterin synthase subunit MoaE"/>
    <property type="match status" value="1"/>
</dbReference>
<reference key="1">
    <citation type="journal article" date="2007" name="Nat. Biotechnol.">
        <title>Genome sequencing and analysis of the versatile cell factory Aspergillus niger CBS 513.88.</title>
        <authorList>
            <person name="Pel H.J."/>
            <person name="de Winde J.H."/>
            <person name="Archer D.B."/>
            <person name="Dyer P.S."/>
            <person name="Hofmann G."/>
            <person name="Schaap P.J."/>
            <person name="Turner G."/>
            <person name="de Vries R.P."/>
            <person name="Albang R."/>
            <person name="Albermann K."/>
            <person name="Andersen M.R."/>
            <person name="Bendtsen J.D."/>
            <person name="Benen J.A.E."/>
            <person name="van den Berg M."/>
            <person name="Breestraat S."/>
            <person name="Caddick M.X."/>
            <person name="Contreras R."/>
            <person name="Cornell M."/>
            <person name="Coutinho P.M."/>
            <person name="Danchin E.G.J."/>
            <person name="Debets A.J.M."/>
            <person name="Dekker P."/>
            <person name="van Dijck P.W.M."/>
            <person name="van Dijk A."/>
            <person name="Dijkhuizen L."/>
            <person name="Driessen A.J.M."/>
            <person name="d'Enfert C."/>
            <person name="Geysens S."/>
            <person name="Goosen C."/>
            <person name="Groot G.S.P."/>
            <person name="de Groot P.W.J."/>
            <person name="Guillemette T."/>
            <person name="Henrissat B."/>
            <person name="Herweijer M."/>
            <person name="van den Hombergh J.P.T.W."/>
            <person name="van den Hondel C.A.M.J.J."/>
            <person name="van der Heijden R.T.J.M."/>
            <person name="van der Kaaij R.M."/>
            <person name="Klis F.M."/>
            <person name="Kools H.J."/>
            <person name="Kubicek C.P."/>
            <person name="van Kuyk P.A."/>
            <person name="Lauber J."/>
            <person name="Lu X."/>
            <person name="van der Maarel M.J.E.C."/>
            <person name="Meulenberg R."/>
            <person name="Menke H."/>
            <person name="Mortimer M.A."/>
            <person name="Nielsen J."/>
            <person name="Oliver S.G."/>
            <person name="Olsthoorn M."/>
            <person name="Pal K."/>
            <person name="van Peij N.N.M.E."/>
            <person name="Ram A.F.J."/>
            <person name="Rinas U."/>
            <person name="Roubos J.A."/>
            <person name="Sagt C.M.J."/>
            <person name="Schmoll M."/>
            <person name="Sun J."/>
            <person name="Ussery D."/>
            <person name="Varga J."/>
            <person name="Vervecken W."/>
            <person name="van de Vondervoort P.J.J."/>
            <person name="Wedler H."/>
            <person name="Woesten H.A.B."/>
            <person name="Zeng A.-P."/>
            <person name="van Ooyen A.J.J."/>
            <person name="Visser J."/>
            <person name="Stam H."/>
        </authorList>
    </citation>
    <scope>NUCLEOTIDE SEQUENCE [LARGE SCALE GENOMIC DNA]</scope>
    <source>
        <strain>ATCC MYA-4892 / CBS 513.88 / FGSC A1513</strain>
    </source>
</reference>